<keyword id="KW-0472">Membrane</keyword>
<keyword id="KW-1185">Reference proteome</keyword>
<keyword id="KW-0812">Transmembrane</keyword>
<keyword id="KW-1133">Transmembrane helix</keyword>
<name>WTR40_ARATH</name>
<protein>
    <recommendedName>
        <fullName>WAT1-related protein At5g40210</fullName>
    </recommendedName>
</protein>
<accession>Q945L4</accession>
<accession>Q9FL11</accession>
<reference key="1">
    <citation type="journal article" date="1998" name="DNA Res.">
        <title>Structural analysis of Arabidopsis thaliana chromosome 5. V. Sequence features of the regions of 1,381,565 bp covered by twenty one physically assigned P1 and TAC clones.</title>
        <authorList>
            <person name="Kaneko T."/>
            <person name="Kotani H."/>
            <person name="Nakamura Y."/>
            <person name="Sato S."/>
            <person name="Asamizu E."/>
            <person name="Miyajima N."/>
            <person name="Tabata S."/>
        </authorList>
    </citation>
    <scope>NUCLEOTIDE SEQUENCE [LARGE SCALE GENOMIC DNA]</scope>
    <source>
        <strain>cv. Columbia</strain>
    </source>
</reference>
<reference key="2">
    <citation type="journal article" date="2017" name="Plant J.">
        <title>Araport11: a complete reannotation of the Arabidopsis thaliana reference genome.</title>
        <authorList>
            <person name="Cheng C.Y."/>
            <person name="Krishnakumar V."/>
            <person name="Chan A.P."/>
            <person name="Thibaud-Nissen F."/>
            <person name="Schobel S."/>
            <person name="Town C.D."/>
        </authorList>
    </citation>
    <scope>GENOME REANNOTATION</scope>
    <source>
        <strain>cv. Columbia</strain>
    </source>
</reference>
<reference key="3">
    <citation type="journal article" date="2003" name="Science">
        <title>Empirical analysis of transcriptional activity in the Arabidopsis genome.</title>
        <authorList>
            <person name="Yamada K."/>
            <person name="Lim J."/>
            <person name="Dale J.M."/>
            <person name="Chen H."/>
            <person name="Shinn P."/>
            <person name="Palm C.J."/>
            <person name="Southwick A.M."/>
            <person name="Wu H.C."/>
            <person name="Kim C.J."/>
            <person name="Nguyen M."/>
            <person name="Pham P.K."/>
            <person name="Cheuk R.F."/>
            <person name="Karlin-Newmann G."/>
            <person name="Liu S.X."/>
            <person name="Lam B."/>
            <person name="Sakano H."/>
            <person name="Wu T."/>
            <person name="Yu G."/>
            <person name="Miranda M."/>
            <person name="Quach H.L."/>
            <person name="Tripp M."/>
            <person name="Chang C.H."/>
            <person name="Lee J.M."/>
            <person name="Toriumi M.J."/>
            <person name="Chan M.M."/>
            <person name="Tang C.C."/>
            <person name="Onodera C.S."/>
            <person name="Deng J.M."/>
            <person name="Akiyama K."/>
            <person name="Ansari Y."/>
            <person name="Arakawa T."/>
            <person name="Banh J."/>
            <person name="Banno F."/>
            <person name="Bowser L."/>
            <person name="Brooks S.Y."/>
            <person name="Carninci P."/>
            <person name="Chao Q."/>
            <person name="Choy N."/>
            <person name="Enju A."/>
            <person name="Goldsmith A.D."/>
            <person name="Gurjal M."/>
            <person name="Hansen N.F."/>
            <person name="Hayashizaki Y."/>
            <person name="Johnson-Hopson C."/>
            <person name="Hsuan V.W."/>
            <person name="Iida K."/>
            <person name="Karnes M."/>
            <person name="Khan S."/>
            <person name="Koesema E."/>
            <person name="Ishida J."/>
            <person name="Jiang P.X."/>
            <person name="Jones T."/>
            <person name="Kawai J."/>
            <person name="Kamiya A."/>
            <person name="Meyers C."/>
            <person name="Nakajima M."/>
            <person name="Narusaka M."/>
            <person name="Seki M."/>
            <person name="Sakurai T."/>
            <person name="Satou M."/>
            <person name="Tamse R."/>
            <person name="Vaysberg M."/>
            <person name="Wallender E.K."/>
            <person name="Wong C."/>
            <person name="Yamamura Y."/>
            <person name="Yuan S."/>
            <person name="Shinozaki K."/>
            <person name="Davis R.W."/>
            <person name="Theologis A."/>
            <person name="Ecker J.R."/>
        </authorList>
    </citation>
    <scope>NUCLEOTIDE SEQUENCE [LARGE SCALE MRNA]</scope>
    <source>
        <strain>cv. Columbia</strain>
    </source>
</reference>
<feature type="chain" id="PRO_0000421347" description="WAT1-related protein At5g40210">
    <location>
        <begin position="1"/>
        <end position="339"/>
    </location>
</feature>
<feature type="transmembrane region" description="Helical" evidence="2">
    <location>
        <begin position="11"/>
        <end position="31"/>
    </location>
</feature>
<feature type="transmembrane region" description="Helical" evidence="2">
    <location>
        <begin position="42"/>
        <end position="62"/>
    </location>
</feature>
<feature type="transmembrane region" description="Helical" evidence="2">
    <location>
        <begin position="74"/>
        <end position="94"/>
    </location>
</feature>
<feature type="transmembrane region" description="Helical" evidence="2">
    <location>
        <begin position="104"/>
        <end position="124"/>
    </location>
</feature>
<feature type="transmembrane region" description="Helical" evidence="2">
    <location>
        <begin position="140"/>
        <end position="160"/>
    </location>
</feature>
<feature type="transmembrane region" description="Helical" evidence="2">
    <location>
        <begin position="168"/>
        <end position="188"/>
    </location>
</feature>
<feature type="transmembrane region" description="Helical" evidence="2">
    <location>
        <begin position="200"/>
        <end position="220"/>
    </location>
</feature>
<feature type="transmembrane region" description="Helical" evidence="2">
    <location>
        <begin position="233"/>
        <end position="253"/>
    </location>
</feature>
<feature type="transmembrane region" description="Helical" evidence="2">
    <location>
        <begin position="266"/>
        <end position="286"/>
    </location>
</feature>
<feature type="transmembrane region" description="Helical" evidence="2">
    <location>
        <begin position="289"/>
        <end position="309"/>
    </location>
</feature>
<feature type="domain" description="EamA">
    <location>
        <begin position="29"/>
        <end position="154"/>
    </location>
</feature>
<sequence length="339" mass="36577">MVHGRLCNRDGWILTAMVVTEFSNVGVNTLVKAATSKGLSPFVVLVYSYTFGSLLLLPLTFFSFRSRSLPPLTFSILCNMGILGLIASAFQILGYNGIKYSSPTLSSAMSNVNPAFTFILAVVFRMENISLGKKSSVAKVLGTILSIIGALVVTLYHGPMLMSSHSDWIIGGGLLALQYILVSVSYLVMAHTMGRYPSAVVVTLVHNVCIAVVCAFVSLLAEKDNPKAWVIRFDITLITVVATGILNSGYYVIHTWAVSHKGPVYLSMFKPLSILIAAVSTFIFLGESLYLGSVMGGILISIGFYMVLWGKAKEDKVDIIGAIESSPSHNAPLLDNFKS</sequence>
<proteinExistence type="evidence at transcript level"/>
<gene>
    <name type="ordered locus">At5g40210</name>
    <name type="ORF">MSN9.110</name>
</gene>
<dbReference type="EMBL" id="AB010699">
    <property type="protein sequence ID" value="BAB10902.1"/>
    <property type="status" value="ALT_SEQ"/>
    <property type="molecule type" value="Genomic_DNA"/>
</dbReference>
<dbReference type="EMBL" id="CP002688">
    <property type="protein sequence ID" value="AED94520.1"/>
    <property type="molecule type" value="Genomic_DNA"/>
</dbReference>
<dbReference type="EMBL" id="AF412089">
    <property type="protein sequence ID" value="AAL06542.1"/>
    <property type="molecule type" value="mRNA"/>
</dbReference>
<dbReference type="EMBL" id="BT001013">
    <property type="protein sequence ID" value="AAN46767.1"/>
    <property type="molecule type" value="mRNA"/>
</dbReference>
<dbReference type="RefSeq" id="NP_568578.1">
    <property type="nucleotide sequence ID" value="NM_123385.3"/>
</dbReference>
<dbReference type="SMR" id="Q945L4"/>
<dbReference type="BioGRID" id="19270">
    <property type="interactions" value="1"/>
</dbReference>
<dbReference type="IntAct" id="Q945L4">
    <property type="interactions" value="1"/>
</dbReference>
<dbReference type="PaxDb" id="3702-AT5G40210.1"/>
<dbReference type="EnsemblPlants" id="AT5G40210.1">
    <property type="protein sequence ID" value="AT5G40210.1"/>
    <property type="gene ID" value="AT5G40210"/>
</dbReference>
<dbReference type="GeneID" id="834019"/>
<dbReference type="Gramene" id="AT5G40210.1">
    <property type="protein sequence ID" value="AT5G40210.1"/>
    <property type="gene ID" value="AT5G40210"/>
</dbReference>
<dbReference type="KEGG" id="ath:AT5G40210"/>
<dbReference type="Araport" id="AT5G40210"/>
<dbReference type="TAIR" id="AT5G40210">
    <property type="gene designation" value="UMAMIT42"/>
</dbReference>
<dbReference type="eggNOG" id="ENOG502QRQK">
    <property type="taxonomic scope" value="Eukaryota"/>
</dbReference>
<dbReference type="HOGENOM" id="CLU_025359_0_1_1"/>
<dbReference type="InParanoid" id="Q945L4"/>
<dbReference type="OMA" id="VYSYTFG"/>
<dbReference type="PhylomeDB" id="Q945L4"/>
<dbReference type="PRO" id="PR:Q945L4"/>
<dbReference type="Proteomes" id="UP000006548">
    <property type="component" value="Chromosome 5"/>
</dbReference>
<dbReference type="ExpressionAtlas" id="Q945L4">
    <property type="expression patterns" value="baseline and differential"/>
</dbReference>
<dbReference type="GO" id="GO:0016020">
    <property type="term" value="C:membrane"/>
    <property type="evidence" value="ECO:0007669"/>
    <property type="project" value="UniProtKB-SubCell"/>
</dbReference>
<dbReference type="GO" id="GO:0022857">
    <property type="term" value="F:transmembrane transporter activity"/>
    <property type="evidence" value="ECO:0007669"/>
    <property type="project" value="InterPro"/>
</dbReference>
<dbReference type="InterPro" id="IPR000620">
    <property type="entry name" value="EamA_dom"/>
</dbReference>
<dbReference type="InterPro" id="IPR030184">
    <property type="entry name" value="WAT1-related"/>
</dbReference>
<dbReference type="PANTHER" id="PTHR31218">
    <property type="entry name" value="WAT1-RELATED PROTEIN"/>
    <property type="match status" value="1"/>
</dbReference>
<dbReference type="Pfam" id="PF00892">
    <property type="entry name" value="EamA"/>
    <property type="match status" value="2"/>
</dbReference>
<dbReference type="SUPFAM" id="SSF103481">
    <property type="entry name" value="Multidrug resistance efflux transporter EmrE"/>
    <property type="match status" value="2"/>
</dbReference>
<organism>
    <name type="scientific">Arabidopsis thaliana</name>
    <name type="common">Mouse-ear cress</name>
    <dbReference type="NCBI Taxonomy" id="3702"/>
    <lineage>
        <taxon>Eukaryota</taxon>
        <taxon>Viridiplantae</taxon>
        <taxon>Streptophyta</taxon>
        <taxon>Embryophyta</taxon>
        <taxon>Tracheophyta</taxon>
        <taxon>Spermatophyta</taxon>
        <taxon>Magnoliopsida</taxon>
        <taxon>eudicotyledons</taxon>
        <taxon>Gunneridae</taxon>
        <taxon>Pentapetalae</taxon>
        <taxon>rosids</taxon>
        <taxon>malvids</taxon>
        <taxon>Brassicales</taxon>
        <taxon>Brassicaceae</taxon>
        <taxon>Camelineae</taxon>
        <taxon>Arabidopsis</taxon>
    </lineage>
</organism>
<evidence type="ECO:0000250" key="1"/>
<evidence type="ECO:0000255" key="2"/>
<evidence type="ECO:0000305" key="3"/>
<comment type="subcellular location">
    <subcellularLocation>
        <location evidence="1">Membrane</location>
        <topology evidence="3">Multi-pass membrane protein</topology>
    </subcellularLocation>
</comment>
<comment type="similarity">
    <text evidence="3">Belongs to the drug/metabolite transporter (DMT) superfamily. Plant drug/metabolite exporter (P-DME) (TC 2.A.7.4) family.</text>
</comment>
<comment type="sequence caution" evidence="3">
    <conflict type="erroneous gene model prediction">
        <sequence resource="EMBL-CDS" id="BAB10902"/>
    </conflict>
</comment>